<accession>C0MBK0</accession>
<sequence>MIEASKLRAGMTFEAEGKLIRVLEASHHKPGKGNTIMRMKLRDVRTGSTFDTTYRPDEKFEQAIIETVPAQYLYKMDETAYFMNTETYDQYEIPVANVEQELLYILENSDVKIQFYGTEVIGVQVPTTVELTVTETQPSIKGATVTGSGKPATLETGLVVNVPDFIEVGQKLIINTAEGTYVSRA</sequence>
<name>EFP_STRE4</name>
<gene>
    <name evidence="1" type="primary">efp</name>
    <name type="ordered locus">SEQ_0420</name>
</gene>
<proteinExistence type="inferred from homology"/>
<keyword id="KW-0963">Cytoplasm</keyword>
<keyword id="KW-0251">Elongation factor</keyword>
<keyword id="KW-0648">Protein biosynthesis</keyword>
<dbReference type="EMBL" id="FM204883">
    <property type="protein sequence ID" value="CAW92583.1"/>
    <property type="molecule type" value="Genomic_DNA"/>
</dbReference>
<dbReference type="RefSeq" id="WP_012679036.1">
    <property type="nucleotide sequence ID" value="NC_012471.1"/>
</dbReference>
<dbReference type="SMR" id="C0MBK0"/>
<dbReference type="KEGG" id="seu:SEQ_0420"/>
<dbReference type="HOGENOM" id="CLU_074944_3_0_9"/>
<dbReference type="OrthoDB" id="9801844at2"/>
<dbReference type="UniPathway" id="UPA00345"/>
<dbReference type="Proteomes" id="UP000001365">
    <property type="component" value="Chromosome"/>
</dbReference>
<dbReference type="GO" id="GO:0005737">
    <property type="term" value="C:cytoplasm"/>
    <property type="evidence" value="ECO:0007669"/>
    <property type="project" value="UniProtKB-SubCell"/>
</dbReference>
<dbReference type="GO" id="GO:0003746">
    <property type="term" value="F:translation elongation factor activity"/>
    <property type="evidence" value="ECO:0007669"/>
    <property type="project" value="UniProtKB-UniRule"/>
</dbReference>
<dbReference type="GO" id="GO:0043043">
    <property type="term" value="P:peptide biosynthetic process"/>
    <property type="evidence" value="ECO:0007669"/>
    <property type="project" value="InterPro"/>
</dbReference>
<dbReference type="CDD" id="cd04470">
    <property type="entry name" value="S1_EF-P_repeat_1"/>
    <property type="match status" value="1"/>
</dbReference>
<dbReference type="CDD" id="cd05794">
    <property type="entry name" value="S1_EF-P_repeat_2"/>
    <property type="match status" value="1"/>
</dbReference>
<dbReference type="FunFam" id="2.30.30.30:FF:000003">
    <property type="entry name" value="Elongation factor P"/>
    <property type="match status" value="1"/>
</dbReference>
<dbReference type="FunFam" id="2.40.50.140:FF:000004">
    <property type="entry name" value="Elongation factor P"/>
    <property type="match status" value="1"/>
</dbReference>
<dbReference type="FunFam" id="2.40.50.140:FF:000009">
    <property type="entry name" value="Elongation factor P"/>
    <property type="match status" value="1"/>
</dbReference>
<dbReference type="Gene3D" id="2.30.30.30">
    <property type="match status" value="1"/>
</dbReference>
<dbReference type="Gene3D" id="2.40.50.140">
    <property type="entry name" value="Nucleic acid-binding proteins"/>
    <property type="match status" value="2"/>
</dbReference>
<dbReference type="HAMAP" id="MF_00141">
    <property type="entry name" value="EF_P"/>
    <property type="match status" value="1"/>
</dbReference>
<dbReference type="InterPro" id="IPR015365">
    <property type="entry name" value="Elong-fact-P_C"/>
</dbReference>
<dbReference type="InterPro" id="IPR012340">
    <property type="entry name" value="NA-bd_OB-fold"/>
</dbReference>
<dbReference type="InterPro" id="IPR014722">
    <property type="entry name" value="Rib_uL2_dom2"/>
</dbReference>
<dbReference type="InterPro" id="IPR020599">
    <property type="entry name" value="Transl_elong_fac_P/YeiP"/>
</dbReference>
<dbReference type="InterPro" id="IPR013185">
    <property type="entry name" value="Transl_elong_KOW-like"/>
</dbReference>
<dbReference type="InterPro" id="IPR001059">
    <property type="entry name" value="Transl_elong_P/YeiP_cen"/>
</dbReference>
<dbReference type="InterPro" id="IPR013852">
    <property type="entry name" value="Transl_elong_P/YeiP_CS"/>
</dbReference>
<dbReference type="InterPro" id="IPR011768">
    <property type="entry name" value="Transl_elongation_fac_P"/>
</dbReference>
<dbReference type="InterPro" id="IPR008991">
    <property type="entry name" value="Translation_prot_SH3-like_sf"/>
</dbReference>
<dbReference type="NCBIfam" id="TIGR00038">
    <property type="entry name" value="efp"/>
    <property type="match status" value="1"/>
</dbReference>
<dbReference type="NCBIfam" id="NF001810">
    <property type="entry name" value="PRK00529.1"/>
    <property type="match status" value="1"/>
</dbReference>
<dbReference type="PANTHER" id="PTHR30053">
    <property type="entry name" value="ELONGATION FACTOR P"/>
    <property type="match status" value="1"/>
</dbReference>
<dbReference type="PANTHER" id="PTHR30053:SF12">
    <property type="entry name" value="ELONGATION FACTOR P (EF-P) FAMILY PROTEIN"/>
    <property type="match status" value="1"/>
</dbReference>
<dbReference type="Pfam" id="PF01132">
    <property type="entry name" value="EFP"/>
    <property type="match status" value="1"/>
</dbReference>
<dbReference type="Pfam" id="PF08207">
    <property type="entry name" value="EFP_N"/>
    <property type="match status" value="1"/>
</dbReference>
<dbReference type="Pfam" id="PF09285">
    <property type="entry name" value="Elong-fact-P_C"/>
    <property type="match status" value="1"/>
</dbReference>
<dbReference type="PIRSF" id="PIRSF005901">
    <property type="entry name" value="EF-P"/>
    <property type="match status" value="1"/>
</dbReference>
<dbReference type="SMART" id="SM01185">
    <property type="entry name" value="EFP"/>
    <property type="match status" value="1"/>
</dbReference>
<dbReference type="SMART" id="SM00841">
    <property type="entry name" value="Elong-fact-P_C"/>
    <property type="match status" value="1"/>
</dbReference>
<dbReference type="SUPFAM" id="SSF50249">
    <property type="entry name" value="Nucleic acid-binding proteins"/>
    <property type="match status" value="2"/>
</dbReference>
<dbReference type="SUPFAM" id="SSF50104">
    <property type="entry name" value="Translation proteins SH3-like domain"/>
    <property type="match status" value="1"/>
</dbReference>
<dbReference type="PROSITE" id="PS01275">
    <property type="entry name" value="EFP"/>
    <property type="match status" value="1"/>
</dbReference>
<protein>
    <recommendedName>
        <fullName evidence="1">Elongation factor P</fullName>
        <shortName evidence="1">EF-P</shortName>
    </recommendedName>
</protein>
<feature type="chain" id="PRO_1000123028" description="Elongation factor P">
    <location>
        <begin position="1"/>
        <end position="185"/>
    </location>
</feature>
<evidence type="ECO:0000255" key="1">
    <source>
        <dbReference type="HAMAP-Rule" id="MF_00141"/>
    </source>
</evidence>
<reference key="1">
    <citation type="journal article" date="2009" name="PLoS Pathog.">
        <title>Genomic evidence for the evolution of Streptococcus equi: host restriction, increased virulence, and genetic exchange with human pathogens.</title>
        <authorList>
            <person name="Holden M.T.G."/>
            <person name="Heather Z."/>
            <person name="Paillot R."/>
            <person name="Steward K.F."/>
            <person name="Webb K."/>
            <person name="Ainslie F."/>
            <person name="Jourdan T."/>
            <person name="Bason N.C."/>
            <person name="Holroyd N.E."/>
            <person name="Mungall K."/>
            <person name="Quail M.A."/>
            <person name="Sanders M."/>
            <person name="Simmonds M."/>
            <person name="Willey D."/>
            <person name="Brooks K."/>
            <person name="Aanensen D.M."/>
            <person name="Spratt B.G."/>
            <person name="Jolley K.A."/>
            <person name="Maiden M.C.J."/>
            <person name="Kehoe M."/>
            <person name="Chanter N."/>
            <person name="Bentley S.D."/>
            <person name="Robinson C."/>
            <person name="Maskell D.J."/>
            <person name="Parkhill J."/>
            <person name="Waller A.S."/>
        </authorList>
    </citation>
    <scope>NUCLEOTIDE SEQUENCE [LARGE SCALE GENOMIC DNA]</scope>
    <source>
        <strain>4047</strain>
    </source>
</reference>
<organism>
    <name type="scientific">Streptococcus equi subsp. equi (strain 4047)</name>
    <dbReference type="NCBI Taxonomy" id="553482"/>
    <lineage>
        <taxon>Bacteria</taxon>
        <taxon>Bacillati</taxon>
        <taxon>Bacillota</taxon>
        <taxon>Bacilli</taxon>
        <taxon>Lactobacillales</taxon>
        <taxon>Streptococcaceae</taxon>
        <taxon>Streptococcus</taxon>
    </lineage>
</organism>
<comment type="function">
    <text evidence="1">Involved in peptide bond synthesis. Stimulates efficient translation and peptide-bond synthesis on native or reconstituted 70S ribosomes in vitro. Probably functions indirectly by altering the affinity of the ribosome for aminoacyl-tRNA, thus increasing their reactivity as acceptors for peptidyl transferase.</text>
</comment>
<comment type="pathway">
    <text evidence="1">Protein biosynthesis; polypeptide chain elongation.</text>
</comment>
<comment type="subcellular location">
    <subcellularLocation>
        <location evidence="1">Cytoplasm</location>
    </subcellularLocation>
</comment>
<comment type="similarity">
    <text evidence="1">Belongs to the elongation factor P family.</text>
</comment>